<name>RS2_BACSU</name>
<gene>
    <name type="primary">rpsB</name>
    <name type="ordered locus">BSU16490</name>
</gene>
<protein>
    <recommendedName>
        <fullName evidence="7">Small ribosomal subunit protein uS2</fullName>
    </recommendedName>
    <alternativeName>
        <fullName>30S ribosomal protein S2</fullName>
    </alternativeName>
    <alternativeName>
        <fullName>BS1</fullName>
    </alternativeName>
    <alternativeName>
        <fullName>Vegetative protein 209</fullName>
        <shortName>VEG209</shortName>
    </alternativeName>
</protein>
<keyword id="KW-0002">3D-structure</keyword>
<keyword id="KW-0903">Direct protein sequencing</keyword>
<keyword id="KW-1185">Reference proteome</keyword>
<keyword id="KW-0687">Ribonucleoprotein</keyword>
<keyword id="KW-0689">Ribosomal protein</keyword>
<sequence>MSVISMKQLLEAGVHFGHQTRRWNPKMKRYIFTERNGIYIIDLQKTVKKVEEAYNFTKNLAAEGGKILFVGTKKQAQDSVKEEAQRSGMYYVNQRWLGGTLTNFETIQKRIKRLKDIEKMQENGTFDVLPKKEVVQLKKELERLEKFLGGIKDMKDLPDALFIIDPRKERIAVAEARKLNIPIIGIVDTNCDPDEIDVVIPANDDAIRAVKLLTSKMADAILEAKQGEEEAEVAEETAPETETTTA</sequence>
<reference key="1">
    <citation type="journal article" date="1997" name="Nature">
        <title>The complete genome sequence of the Gram-positive bacterium Bacillus subtilis.</title>
        <authorList>
            <person name="Kunst F."/>
            <person name="Ogasawara N."/>
            <person name="Moszer I."/>
            <person name="Albertini A.M."/>
            <person name="Alloni G."/>
            <person name="Azevedo V."/>
            <person name="Bertero M.G."/>
            <person name="Bessieres P."/>
            <person name="Bolotin A."/>
            <person name="Borchert S."/>
            <person name="Borriss R."/>
            <person name="Boursier L."/>
            <person name="Brans A."/>
            <person name="Braun M."/>
            <person name="Brignell S.C."/>
            <person name="Bron S."/>
            <person name="Brouillet S."/>
            <person name="Bruschi C.V."/>
            <person name="Caldwell B."/>
            <person name="Capuano V."/>
            <person name="Carter N.M."/>
            <person name="Choi S.-K."/>
            <person name="Codani J.-J."/>
            <person name="Connerton I.F."/>
            <person name="Cummings N.J."/>
            <person name="Daniel R.A."/>
            <person name="Denizot F."/>
            <person name="Devine K.M."/>
            <person name="Duesterhoeft A."/>
            <person name="Ehrlich S.D."/>
            <person name="Emmerson P.T."/>
            <person name="Entian K.-D."/>
            <person name="Errington J."/>
            <person name="Fabret C."/>
            <person name="Ferrari E."/>
            <person name="Foulger D."/>
            <person name="Fritz C."/>
            <person name="Fujita M."/>
            <person name="Fujita Y."/>
            <person name="Fuma S."/>
            <person name="Galizzi A."/>
            <person name="Galleron N."/>
            <person name="Ghim S.-Y."/>
            <person name="Glaser P."/>
            <person name="Goffeau A."/>
            <person name="Golightly E.J."/>
            <person name="Grandi G."/>
            <person name="Guiseppi G."/>
            <person name="Guy B.J."/>
            <person name="Haga K."/>
            <person name="Haiech J."/>
            <person name="Harwood C.R."/>
            <person name="Henaut A."/>
            <person name="Hilbert H."/>
            <person name="Holsappel S."/>
            <person name="Hosono S."/>
            <person name="Hullo M.-F."/>
            <person name="Itaya M."/>
            <person name="Jones L.-M."/>
            <person name="Joris B."/>
            <person name="Karamata D."/>
            <person name="Kasahara Y."/>
            <person name="Klaerr-Blanchard M."/>
            <person name="Klein C."/>
            <person name="Kobayashi Y."/>
            <person name="Koetter P."/>
            <person name="Koningstein G."/>
            <person name="Krogh S."/>
            <person name="Kumano M."/>
            <person name="Kurita K."/>
            <person name="Lapidus A."/>
            <person name="Lardinois S."/>
            <person name="Lauber J."/>
            <person name="Lazarevic V."/>
            <person name="Lee S.-M."/>
            <person name="Levine A."/>
            <person name="Liu H."/>
            <person name="Masuda S."/>
            <person name="Mauel C."/>
            <person name="Medigue C."/>
            <person name="Medina N."/>
            <person name="Mellado R.P."/>
            <person name="Mizuno M."/>
            <person name="Moestl D."/>
            <person name="Nakai S."/>
            <person name="Noback M."/>
            <person name="Noone D."/>
            <person name="O'Reilly M."/>
            <person name="Ogawa K."/>
            <person name="Ogiwara A."/>
            <person name="Oudega B."/>
            <person name="Park S.-H."/>
            <person name="Parro V."/>
            <person name="Pohl T.M."/>
            <person name="Portetelle D."/>
            <person name="Porwollik S."/>
            <person name="Prescott A.M."/>
            <person name="Presecan E."/>
            <person name="Pujic P."/>
            <person name="Purnelle B."/>
            <person name="Rapoport G."/>
            <person name="Rey M."/>
            <person name="Reynolds S."/>
            <person name="Rieger M."/>
            <person name="Rivolta C."/>
            <person name="Rocha E."/>
            <person name="Roche B."/>
            <person name="Rose M."/>
            <person name="Sadaie Y."/>
            <person name="Sato T."/>
            <person name="Scanlan E."/>
            <person name="Schleich S."/>
            <person name="Schroeter R."/>
            <person name="Scoffone F."/>
            <person name="Sekiguchi J."/>
            <person name="Sekowska A."/>
            <person name="Seror S.J."/>
            <person name="Serror P."/>
            <person name="Shin B.-S."/>
            <person name="Soldo B."/>
            <person name="Sorokin A."/>
            <person name="Tacconi E."/>
            <person name="Takagi T."/>
            <person name="Takahashi H."/>
            <person name="Takemaru K."/>
            <person name="Takeuchi M."/>
            <person name="Tamakoshi A."/>
            <person name="Tanaka T."/>
            <person name="Terpstra P."/>
            <person name="Tognoni A."/>
            <person name="Tosato V."/>
            <person name="Uchiyama S."/>
            <person name="Vandenbol M."/>
            <person name="Vannier F."/>
            <person name="Vassarotti A."/>
            <person name="Viari A."/>
            <person name="Wambutt R."/>
            <person name="Wedler E."/>
            <person name="Wedler H."/>
            <person name="Weitzenegger T."/>
            <person name="Winters P."/>
            <person name="Wipat A."/>
            <person name="Yamamoto H."/>
            <person name="Yamane K."/>
            <person name="Yasumoto K."/>
            <person name="Yata K."/>
            <person name="Yoshida K."/>
            <person name="Yoshikawa H.-F."/>
            <person name="Zumstein E."/>
            <person name="Yoshikawa H."/>
            <person name="Danchin A."/>
        </authorList>
    </citation>
    <scope>NUCLEOTIDE SEQUENCE [LARGE SCALE GENOMIC DNA]</scope>
    <source>
        <strain>168</strain>
    </source>
</reference>
<reference key="2">
    <citation type="journal article" date="1982" name="Mol. Gen. Genet.">
        <title>Purification and characterization of 30S ribosomal proteins from Bacillus subtilis: correlation to Escherichia coli 30S proteins.</title>
        <authorList>
            <person name="Higo K."/>
            <person name="Otaka E."/>
            <person name="Osawa S."/>
        </authorList>
    </citation>
    <scope>PROTEIN SEQUENCE OF 2-20</scope>
</reference>
<reference key="3">
    <citation type="journal article" date="1997" name="Electrophoresis">
        <title>First steps from a two-dimensional protein index towards a response-regulation map for Bacillus subtilis.</title>
        <authorList>
            <person name="Antelmann H."/>
            <person name="Bernhardt J."/>
            <person name="Schmid R."/>
            <person name="Mach H."/>
            <person name="Voelker U."/>
            <person name="Hecker M."/>
        </authorList>
    </citation>
    <scope>PROTEIN SEQUENCE OF 2-20</scope>
    <source>
        <strain>168 / IS58</strain>
    </source>
</reference>
<reference key="4">
    <citation type="journal article" date="2021" name="Redox Biol.">
        <title>The Bacillus subtilis monothiol bacilliredoxin BrxC (YtxJ) and the Bdr (YpdA) disulfide reductase reduce S-bacillithiolated proteins.</title>
        <authorList>
            <person name="Gaballa A."/>
            <person name="Su T.T."/>
            <person name="Helmann J.D."/>
        </authorList>
    </citation>
    <scope>INTERACTION WITH BRXC</scope>
    <scope>IDENTIFICATION BY MASS SPECTROMETRY</scope>
    <source>
        <strain evidence="6">168 / CU1065</strain>
    </source>
</reference>
<reference evidence="8 9" key="5">
    <citation type="journal article" date="2018" name="Proc. Natl. Acad. Sci. U.S.A.">
        <title>Structural basis for antibiotic resistance mediated by the Bacillus subtilis ABCF ATPase VmlR.</title>
        <authorList>
            <person name="Crowe-McAuliffe C."/>
            <person name="Graf M."/>
            <person name="Huter P."/>
            <person name="Takada H."/>
            <person name="Abdelshahid M."/>
            <person name="Novacek J."/>
            <person name="Murina V."/>
            <person name="Atkinson G.C."/>
            <person name="Hauryliuk V."/>
            <person name="Wilson D.N."/>
        </authorList>
    </citation>
    <scope>STRUCTURE BY ELECTRON MICROSCOPY (3.10 ANGSTROMS) OF 1-246 WITH AND WITHOUT VIRGINIAMYCIN M</scope>
    <scope>SUBUNIT</scope>
</reference>
<accession>P21464</accession>
<accession>O31747</accession>
<feature type="initiator methionine" description="Removed" evidence="4 5">
    <location>
        <position position="1"/>
    </location>
</feature>
<feature type="chain" id="PRO_0000134131" description="Small ribosomal subunit protein uS2">
    <location>
        <begin position="2"/>
        <end position="246"/>
    </location>
</feature>
<feature type="region of interest" description="Disordered" evidence="1">
    <location>
        <begin position="226"/>
        <end position="246"/>
    </location>
</feature>
<feature type="compositionally biased region" description="Acidic residues" evidence="1">
    <location>
        <begin position="229"/>
        <end position="239"/>
    </location>
</feature>
<feature type="sequence conflict" description="In Ref. 2; AA sequence." evidence="7" ref="2">
    <original>K</original>
    <variation>H</variation>
    <location>
        <position position="7"/>
    </location>
</feature>
<feature type="turn" evidence="10">
    <location>
        <begin position="10"/>
        <end position="13"/>
    </location>
</feature>
<feature type="strand" evidence="10">
    <location>
        <begin position="15"/>
        <end position="22"/>
    </location>
</feature>
<feature type="helix" evidence="10">
    <location>
        <begin position="25"/>
        <end position="27"/>
    </location>
</feature>
<feature type="strand" evidence="10">
    <location>
        <begin position="30"/>
        <end position="34"/>
    </location>
</feature>
<feature type="strand" evidence="10">
    <location>
        <begin position="36"/>
        <end position="41"/>
    </location>
</feature>
<feature type="helix" evidence="10">
    <location>
        <begin position="43"/>
        <end position="61"/>
    </location>
</feature>
<feature type="turn" evidence="10">
    <location>
        <begin position="62"/>
        <end position="64"/>
    </location>
</feature>
<feature type="strand" evidence="10">
    <location>
        <begin position="67"/>
        <end position="70"/>
    </location>
</feature>
<feature type="helix" evidence="10">
    <location>
        <begin position="74"/>
        <end position="76"/>
    </location>
</feature>
<feature type="helix" evidence="10">
    <location>
        <begin position="77"/>
        <end position="86"/>
    </location>
</feature>
<feature type="strand" evidence="10">
    <location>
        <begin position="90"/>
        <end position="94"/>
    </location>
</feature>
<feature type="helix" evidence="10">
    <location>
        <begin position="104"/>
        <end position="123"/>
    </location>
</feature>
<feature type="turn" evidence="10">
    <location>
        <begin position="126"/>
        <end position="128"/>
    </location>
</feature>
<feature type="helix" evidence="10">
    <location>
        <begin position="131"/>
        <end position="147"/>
    </location>
</feature>
<feature type="strand" evidence="10">
    <location>
        <begin position="148"/>
        <end position="150"/>
    </location>
</feature>
<feature type="strand" evidence="10">
    <location>
        <begin position="159"/>
        <end position="165"/>
    </location>
</feature>
<feature type="turn" evidence="10">
    <location>
        <begin position="166"/>
        <end position="169"/>
    </location>
</feature>
<feature type="helix" evidence="10">
    <location>
        <begin position="170"/>
        <end position="178"/>
    </location>
</feature>
<feature type="strand" evidence="10">
    <location>
        <begin position="183"/>
        <end position="186"/>
    </location>
</feature>
<feature type="turn" evidence="10">
    <location>
        <begin position="193"/>
        <end position="195"/>
    </location>
</feature>
<feature type="strand" evidence="10">
    <location>
        <begin position="197"/>
        <end position="199"/>
    </location>
</feature>
<feature type="helix" evidence="10">
    <location>
        <begin position="207"/>
        <end position="225"/>
    </location>
</feature>
<organism>
    <name type="scientific">Bacillus subtilis (strain 168)</name>
    <dbReference type="NCBI Taxonomy" id="224308"/>
    <lineage>
        <taxon>Bacteria</taxon>
        <taxon>Bacillati</taxon>
        <taxon>Bacillota</taxon>
        <taxon>Bacilli</taxon>
        <taxon>Bacillales</taxon>
        <taxon>Bacillaceae</taxon>
        <taxon>Bacillus</taxon>
    </lineage>
</organism>
<dbReference type="EMBL" id="AL009126">
    <property type="protein sequence ID" value="CAB13522.1"/>
    <property type="molecule type" value="Genomic_DNA"/>
</dbReference>
<dbReference type="PIR" id="A69699">
    <property type="entry name" value="A69699"/>
</dbReference>
<dbReference type="RefSeq" id="NP_389531.1">
    <property type="nucleotide sequence ID" value="NC_000964.3"/>
</dbReference>
<dbReference type="RefSeq" id="WP_003220918.1">
    <property type="nucleotide sequence ID" value="NZ_OZ025638.1"/>
</dbReference>
<dbReference type="PDB" id="3J9W">
    <property type="method" value="EM"/>
    <property type="resolution" value="3.90 A"/>
    <property type="chains" value="AB=1-246"/>
</dbReference>
<dbReference type="PDB" id="5NJT">
    <property type="method" value="EM"/>
    <property type="resolution" value="3.80 A"/>
    <property type="chains" value="B=6-229"/>
</dbReference>
<dbReference type="PDB" id="6HA1">
    <property type="method" value="EM"/>
    <property type="resolution" value="3.10 A"/>
    <property type="chains" value="b=1-246"/>
</dbReference>
<dbReference type="PDB" id="6HA8">
    <property type="method" value="EM"/>
    <property type="resolution" value="3.50 A"/>
    <property type="chains" value="b=1-246"/>
</dbReference>
<dbReference type="PDB" id="6HTQ">
    <property type="method" value="EM"/>
    <property type="resolution" value="4.50 A"/>
    <property type="chains" value="b=9-226"/>
</dbReference>
<dbReference type="PDB" id="7O5B">
    <property type="method" value="EM"/>
    <property type="resolution" value="3.33 A"/>
    <property type="chains" value="B=1-246"/>
</dbReference>
<dbReference type="PDB" id="7QGU">
    <property type="method" value="EM"/>
    <property type="resolution" value="4.75 A"/>
    <property type="chains" value="g=1-246"/>
</dbReference>
<dbReference type="PDB" id="7QH4">
    <property type="method" value="EM"/>
    <property type="resolution" value="5.45 A"/>
    <property type="chains" value="X=1-246"/>
</dbReference>
<dbReference type="PDB" id="7QV2">
    <property type="method" value="EM"/>
    <property type="resolution" value="3.50 A"/>
    <property type="chains" value="b=1-246"/>
</dbReference>
<dbReference type="PDB" id="8BUU">
    <property type="method" value="EM"/>
    <property type="resolution" value="2.90 A"/>
    <property type="chains" value="b=1-246"/>
</dbReference>
<dbReference type="PDB" id="8CDU">
    <property type="method" value="EM"/>
    <property type="resolution" value="3.10 A"/>
    <property type="chains" value="D=1-246"/>
</dbReference>
<dbReference type="PDB" id="8CEC">
    <property type="method" value="EM"/>
    <property type="resolution" value="3.57 A"/>
    <property type="chains" value="D=1-246"/>
</dbReference>
<dbReference type="PDB" id="8CED">
    <property type="method" value="EM"/>
    <property type="resolution" value="4.15 A"/>
    <property type="chains" value="D=1-246"/>
</dbReference>
<dbReference type="PDB" id="8CEE">
    <property type="method" value="EM"/>
    <property type="resolution" value="3.70 A"/>
    <property type="chains" value="D=1-246"/>
</dbReference>
<dbReference type="PDB" id="8QPP">
    <property type="method" value="EM"/>
    <property type="resolution" value="3.40 A"/>
    <property type="chains" value="B=1-246"/>
</dbReference>
<dbReference type="PDB" id="8R55">
    <property type="method" value="EM"/>
    <property type="resolution" value="3.57 A"/>
    <property type="chains" value="B=1-246"/>
</dbReference>
<dbReference type="PDBsum" id="3J9W"/>
<dbReference type="PDBsum" id="5NJT"/>
<dbReference type="PDBsum" id="6HA1"/>
<dbReference type="PDBsum" id="6HA8"/>
<dbReference type="PDBsum" id="6HTQ"/>
<dbReference type="PDBsum" id="7O5B"/>
<dbReference type="PDBsum" id="7QGU"/>
<dbReference type="PDBsum" id="7QH4"/>
<dbReference type="PDBsum" id="7QV2"/>
<dbReference type="PDBsum" id="8BUU"/>
<dbReference type="PDBsum" id="8CDU"/>
<dbReference type="PDBsum" id="8CEC"/>
<dbReference type="PDBsum" id="8CED"/>
<dbReference type="PDBsum" id="8CEE"/>
<dbReference type="PDBsum" id="8QPP"/>
<dbReference type="PDBsum" id="8R55"/>
<dbReference type="EMDB" id="EMD-0176"/>
<dbReference type="EMDB" id="EMD-0177"/>
<dbReference type="EMDB" id="EMD-0270"/>
<dbReference type="EMDB" id="EMD-12734"/>
<dbReference type="EMDB" id="EMD-14158"/>
<dbReference type="EMDB" id="EMD-16246"/>
<dbReference type="EMDB" id="EMD-16595"/>
<dbReference type="EMDB" id="EMD-16605"/>
<dbReference type="EMDB" id="EMD-16606"/>
<dbReference type="EMDB" id="EMD-16607"/>
<dbReference type="EMDB" id="EMD-3656"/>
<dbReference type="SMR" id="P21464"/>
<dbReference type="DIP" id="DIP-58541N"/>
<dbReference type="FunCoup" id="P21464">
    <property type="interactions" value="716"/>
</dbReference>
<dbReference type="IntAct" id="P21464">
    <property type="interactions" value="1"/>
</dbReference>
<dbReference type="STRING" id="224308.BSU16490"/>
<dbReference type="jPOST" id="P21464"/>
<dbReference type="PaxDb" id="224308-BSU16490"/>
<dbReference type="EnsemblBacteria" id="CAB13522">
    <property type="protein sequence ID" value="CAB13522"/>
    <property type="gene ID" value="BSU_16490"/>
</dbReference>
<dbReference type="GeneID" id="76978161"/>
<dbReference type="GeneID" id="939599"/>
<dbReference type="KEGG" id="bsu:BSU16490"/>
<dbReference type="PATRIC" id="fig|224308.179.peg.1790"/>
<dbReference type="eggNOG" id="COG0052">
    <property type="taxonomic scope" value="Bacteria"/>
</dbReference>
<dbReference type="InParanoid" id="P21464"/>
<dbReference type="OrthoDB" id="9808036at2"/>
<dbReference type="PhylomeDB" id="P21464"/>
<dbReference type="BioCyc" id="BSUB:BSU16490-MONOMER"/>
<dbReference type="PRO" id="PR:P21464"/>
<dbReference type="Proteomes" id="UP000001570">
    <property type="component" value="Chromosome"/>
</dbReference>
<dbReference type="GO" id="GO:0022627">
    <property type="term" value="C:cytosolic small ribosomal subunit"/>
    <property type="evidence" value="ECO:0000318"/>
    <property type="project" value="GO_Central"/>
</dbReference>
<dbReference type="GO" id="GO:0003735">
    <property type="term" value="F:structural constituent of ribosome"/>
    <property type="evidence" value="ECO:0000318"/>
    <property type="project" value="GO_Central"/>
</dbReference>
<dbReference type="GO" id="GO:0006412">
    <property type="term" value="P:translation"/>
    <property type="evidence" value="ECO:0007669"/>
    <property type="project" value="UniProtKB-UniRule"/>
</dbReference>
<dbReference type="CDD" id="cd01425">
    <property type="entry name" value="RPS2"/>
    <property type="match status" value="1"/>
</dbReference>
<dbReference type="FunFam" id="1.10.287.610:FF:000001">
    <property type="entry name" value="30S ribosomal protein S2"/>
    <property type="match status" value="1"/>
</dbReference>
<dbReference type="Gene3D" id="3.40.50.10490">
    <property type="entry name" value="Glucose-6-phosphate isomerase like protein, domain 1"/>
    <property type="match status" value="1"/>
</dbReference>
<dbReference type="Gene3D" id="1.10.287.610">
    <property type="entry name" value="Helix hairpin bin"/>
    <property type="match status" value="1"/>
</dbReference>
<dbReference type="HAMAP" id="MF_00291_B">
    <property type="entry name" value="Ribosomal_uS2_B"/>
    <property type="match status" value="1"/>
</dbReference>
<dbReference type="InterPro" id="IPR001865">
    <property type="entry name" value="Ribosomal_uS2"/>
</dbReference>
<dbReference type="InterPro" id="IPR005706">
    <property type="entry name" value="Ribosomal_uS2_bac/mit/plastid"/>
</dbReference>
<dbReference type="InterPro" id="IPR018130">
    <property type="entry name" value="Ribosomal_uS2_CS"/>
</dbReference>
<dbReference type="InterPro" id="IPR023591">
    <property type="entry name" value="Ribosomal_uS2_flav_dom_sf"/>
</dbReference>
<dbReference type="NCBIfam" id="TIGR01011">
    <property type="entry name" value="rpsB_bact"/>
    <property type="match status" value="1"/>
</dbReference>
<dbReference type="PANTHER" id="PTHR12534">
    <property type="entry name" value="30S RIBOSOMAL PROTEIN S2 PROKARYOTIC AND ORGANELLAR"/>
    <property type="match status" value="1"/>
</dbReference>
<dbReference type="PANTHER" id="PTHR12534:SF0">
    <property type="entry name" value="SMALL RIBOSOMAL SUBUNIT PROTEIN US2M"/>
    <property type="match status" value="1"/>
</dbReference>
<dbReference type="Pfam" id="PF00318">
    <property type="entry name" value="Ribosomal_S2"/>
    <property type="match status" value="1"/>
</dbReference>
<dbReference type="PRINTS" id="PR00395">
    <property type="entry name" value="RIBOSOMALS2"/>
</dbReference>
<dbReference type="SUPFAM" id="SSF52313">
    <property type="entry name" value="Ribosomal protein S2"/>
    <property type="match status" value="1"/>
</dbReference>
<dbReference type="PROSITE" id="PS00962">
    <property type="entry name" value="RIBOSOMAL_S2_1"/>
    <property type="match status" value="1"/>
</dbReference>
<dbReference type="PROSITE" id="PS00963">
    <property type="entry name" value="RIBOSOMAL_S2_2"/>
    <property type="match status" value="1"/>
</dbReference>
<evidence type="ECO:0000256" key="1">
    <source>
        <dbReference type="SAM" id="MobiDB-lite"/>
    </source>
</evidence>
<evidence type="ECO:0000269" key="2">
    <source>
    </source>
</evidence>
<evidence type="ECO:0000269" key="3">
    <source>
    </source>
</evidence>
<evidence type="ECO:0000269" key="4">
    <source>
    </source>
</evidence>
<evidence type="ECO:0000269" key="5">
    <source>
    </source>
</evidence>
<evidence type="ECO:0000303" key="6">
    <source>
    </source>
</evidence>
<evidence type="ECO:0000305" key="7"/>
<evidence type="ECO:0007744" key="8">
    <source>
        <dbReference type="PDB" id="6HA1"/>
    </source>
</evidence>
<evidence type="ECO:0007744" key="9">
    <source>
        <dbReference type="PDB" id="6HA8"/>
    </source>
</evidence>
<evidence type="ECO:0007829" key="10">
    <source>
        <dbReference type="PDB" id="8CDU"/>
    </source>
</evidence>
<comment type="subunit">
    <text evidence="2 3">Part of the 30S ribosomal subunit (PubMed:30126986). Interacts with BrxC (PubMed:33722570).</text>
</comment>
<comment type="similarity">
    <text evidence="7">Belongs to the universal ribosomal protein uS2 family.</text>
</comment>
<proteinExistence type="evidence at protein level"/>